<proteinExistence type="inferred from homology"/>
<evidence type="ECO:0000250" key="1"/>
<evidence type="ECO:0000255" key="2">
    <source>
        <dbReference type="PROSITE-ProRule" id="PRU01007"/>
    </source>
</evidence>
<evidence type="ECO:0000305" key="3"/>
<keyword id="KW-0028">Amino-acid biosynthesis</keyword>
<keyword id="KW-0100">Branched-chain amino acid biosynthesis</keyword>
<keyword id="KW-0150">Chloroplast</keyword>
<keyword id="KW-0934">Plastid</keyword>
<keyword id="KW-0808">Transferase</keyword>
<accession>P51230</accession>
<sequence>MKHTLSVLVQDEAGVLSRISGLFARRGFNIASLAVGPAEQIGVSRITMVVQGDNRTIEQLTKQLYKLVNILNVQDVTNIPSVERELMLIKIQVNSQNRIEALEIVKIFRANVVDIAEDLIIVEVTGDPGKIVAIEQLLTKFGIIEIARTGKISLVRTSKINTEYLKDKVVAYNA</sequence>
<name>ILVH_PORPU</name>
<comment type="catalytic activity">
    <reaction>
        <text>2 pyruvate + H(+) = (2S)-2-acetolactate + CO2</text>
        <dbReference type="Rhea" id="RHEA:25249"/>
        <dbReference type="ChEBI" id="CHEBI:15361"/>
        <dbReference type="ChEBI" id="CHEBI:15378"/>
        <dbReference type="ChEBI" id="CHEBI:16526"/>
        <dbReference type="ChEBI" id="CHEBI:58476"/>
        <dbReference type="EC" id="2.2.1.6"/>
    </reaction>
</comment>
<comment type="pathway">
    <text>Amino-acid biosynthesis; L-isoleucine biosynthesis; L-isoleucine from 2-oxobutanoate: step 1/4.</text>
</comment>
<comment type="pathway">
    <text>Amino-acid biosynthesis; L-valine biosynthesis; L-valine from pyruvate: step 1/4.</text>
</comment>
<comment type="subunit">
    <text evidence="1">Dimer of large and small chains.</text>
</comment>
<comment type="subcellular location">
    <subcellularLocation>
        <location>Plastid</location>
        <location>Chloroplast</location>
    </subcellularLocation>
</comment>
<comment type="similarity">
    <text evidence="3">Belongs to the acetolactate synthase small subunit family.</text>
</comment>
<protein>
    <recommendedName>
        <fullName>Acetolactate synthase small subunit</fullName>
        <ecNumber>2.2.1.6</ecNumber>
    </recommendedName>
    <alternativeName>
        <fullName>Acetohydroxy-acid synthase small subunit</fullName>
        <shortName>AHAS</shortName>
        <shortName>ALS</shortName>
    </alternativeName>
</protein>
<reference key="1">
    <citation type="journal article" date="1995" name="Plant Mol. Biol. Rep.">
        <title>Complete nucleotide sequence of the Porphyra purpurea chloroplast genome.</title>
        <authorList>
            <person name="Reith M.E."/>
            <person name="Munholland J."/>
        </authorList>
    </citation>
    <scope>NUCLEOTIDE SEQUENCE [LARGE SCALE GENOMIC DNA]</scope>
    <source>
        <strain>Avonport</strain>
    </source>
</reference>
<organism>
    <name type="scientific">Porphyra purpurea</name>
    <name type="common">Red seaweed</name>
    <name type="synonym">Ulva purpurea</name>
    <dbReference type="NCBI Taxonomy" id="2787"/>
    <lineage>
        <taxon>Eukaryota</taxon>
        <taxon>Rhodophyta</taxon>
        <taxon>Bangiophyceae</taxon>
        <taxon>Bangiales</taxon>
        <taxon>Bangiaceae</taxon>
        <taxon>Porphyra</taxon>
    </lineage>
</organism>
<gene>
    <name type="primary">ilvH</name>
</gene>
<dbReference type="EC" id="2.2.1.6"/>
<dbReference type="EMBL" id="U38804">
    <property type="protein sequence ID" value="AAC08116.1"/>
    <property type="molecule type" value="Genomic_DNA"/>
</dbReference>
<dbReference type="PIR" id="S73151">
    <property type="entry name" value="S73151"/>
</dbReference>
<dbReference type="RefSeq" id="NP_053840.1">
    <property type="nucleotide sequence ID" value="NC_000925.1"/>
</dbReference>
<dbReference type="SMR" id="P51230"/>
<dbReference type="GeneID" id="809858"/>
<dbReference type="UniPathway" id="UPA00047">
    <property type="reaction ID" value="UER00055"/>
</dbReference>
<dbReference type="UniPathway" id="UPA00049">
    <property type="reaction ID" value="UER00059"/>
</dbReference>
<dbReference type="GO" id="GO:0009507">
    <property type="term" value="C:chloroplast"/>
    <property type="evidence" value="ECO:0007669"/>
    <property type="project" value="UniProtKB-SubCell"/>
</dbReference>
<dbReference type="GO" id="GO:0005829">
    <property type="term" value="C:cytosol"/>
    <property type="evidence" value="ECO:0007669"/>
    <property type="project" value="TreeGrafter"/>
</dbReference>
<dbReference type="GO" id="GO:0003984">
    <property type="term" value="F:acetolactate synthase activity"/>
    <property type="evidence" value="ECO:0007669"/>
    <property type="project" value="UniProtKB-EC"/>
</dbReference>
<dbReference type="GO" id="GO:1990610">
    <property type="term" value="F:acetolactate synthase regulator activity"/>
    <property type="evidence" value="ECO:0007669"/>
    <property type="project" value="InterPro"/>
</dbReference>
<dbReference type="GO" id="GO:0009097">
    <property type="term" value="P:isoleucine biosynthetic process"/>
    <property type="evidence" value="ECO:0007669"/>
    <property type="project" value="UniProtKB-UniPathway"/>
</dbReference>
<dbReference type="GO" id="GO:0009099">
    <property type="term" value="P:L-valine biosynthetic process"/>
    <property type="evidence" value="ECO:0007669"/>
    <property type="project" value="UniProtKB-UniPathway"/>
</dbReference>
<dbReference type="CDD" id="cd04878">
    <property type="entry name" value="ACT_AHAS"/>
    <property type="match status" value="1"/>
</dbReference>
<dbReference type="FunFam" id="3.30.70.1150:FF:000001">
    <property type="entry name" value="Acetolactate synthase small subunit"/>
    <property type="match status" value="1"/>
</dbReference>
<dbReference type="FunFam" id="3.30.70.260:FF:000001">
    <property type="entry name" value="Acetolactate synthase, small subunit"/>
    <property type="match status" value="1"/>
</dbReference>
<dbReference type="Gene3D" id="3.30.70.260">
    <property type="match status" value="1"/>
</dbReference>
<dbReference type="Gene3D" id="3.30.70.1150">
    <property type="entry name" value="ACT-like. Chain A, domain 2"/>
    <property type="match status" value="1"/>
</dbReference>
<dbReference type="InterPro" id="IPR004789">
    <property type="entry name" value="Acetalactate_synth_ssu"/>
</dbReference>
<dbReference type="InterPro" id="IPR027271">
    <property type="entry name" value="Acetolactate_synth/TF_NikR_C"/>
</dbReference>
<dbReference type="InterPro" id="IPR019455">
    <property type="entry name" value="Acetolactate_synth_ssu_C"/>
</dbReference>
<dbReference type="InterPro" id="IPR045865">
    <property type="entry name" value="ACT-like_dom_sf"/>
</dbReference>
<dbReference type="InterPro" id="IPR002912">
    <property type="entry name" value="ACT_dom"/>
</dbReference>
<dbReference type="InterPro" id="IPR039557">
    <property type="entry name" value="AHAS_ACT"/>
</dbReference>
<dbReference type="InterPro" id="IPR054480">
    <property type="entry name" value="AHAS_small-like_ACT"/>
</dbReference>
<dbReference type="NCBIfam" id="TIGR00119">
    <property type="entry name" value="acolac_sm"/>
    <property type="match status" value="1"/>
</dbReference>
<dbReference type="NCBIfam" id="NF008864">
    <property type="entry name" value="PRK11895.1"/>
    <property type="match status" value="1"/>
</dbReference>
<dbReference type="PANTHER" id="PTHR30239">
    <property type="entry name" value="ACETOLACTATE SYNTHASE SMALL SUBUNIT"/>
    <property type="match status" value="1"/>
</dbReference>
<dbReference type="PANTHER" id="PTHR30239:SF0">
    <property type="entry name" value="ACETOLACTATE SYNTHASE SMALL SUBUNIT 1, CHLOROPLASTIC"/>
    <property type="match status" value="1"/>
</dbReference>
<dbReference type="Pfam" id="PF22629">
    <property type="entry name" value="ACT_AHAS_ss"/>
    <property type="match status" value="1"/>
</dbReference>
<dbReference type="Pfam" id="PF10369">
    <property type="entry name" value="ALS_ss_C"/>
    <property type="match status" value="1"/>
</dbReference>
<dbReference type="SUPFAM" id="SSF55021">
    <property type="entry name" value="ACT-like"/>
    <property type="match status" value="2"/>
</dbReference>
<dbReference type="PROSITE" id="PS51671">
    <property type="entry name" value="ACT"/>
    <property type="match status" value="1"/>
</dbReference>
<geneLocation type="chloroplast"/>
<feature type="chain" id="PRO_0000151428" description="Acetolactate synthase small subunit">
    <location>
        <begin position="1"/>
        <end position="174"/>
    </location>
</feature>
<feature type="domain" description="ACT" evidence="2">
    <location>
        <begin position="4"/>
        <end position="78"/>
    </location>
</feature>